<evidence type="ECO:0000250" key="1"/>
<evidence type="ECO:0000255" key="2">
    <source>
        <dbReference type="PROSITE-ProRule" id="PRU00159"/>
    </source>
</evidence>
<evidence type="ECO:0000255" key="3">
    <source>
        <dbReference type="PROSITE-ProRule" id="PRU10027"/>
    </source>
</evidence>
<evidence type="ECO:0000256" key="4">
    <source>
        <dbReference type="SAM" id="MobiDB-lite"/>
    </source>
</evidence>
<evidence type="ECO:0000269" key="5">
    <source>
    </source>
</evidence>
<evidence type="ECO:0000269" key="6">
    <source>
    </source>
</evidence>
<evidence type="ECO:0000305" key="7"/>
<evidence type="ECO:0007744" key="8">
    <source>
    </source>
</evidence>
<proteinExistence type="evidence at protein level"/>
<sequence length="343" mass="38519">MLLLKKQTEDISSVYEIREKLGSGAFSEVMLAQERGSAHLVALKCIPKKALRGKEALVENEIAVLRRISHPNIVALEDVHESPSHLYLAMELVTGGELFDRIMERGSYTEKDASHLVGQVLGAVSYLHSLGIVHRDLKPENLLYATPFEDSKIMVSDFGLSKIQAGNMLGTACGTPGYVAPELLEQKPYGKAVDVWALGVISYILLCGYPPFYDESDPELFSQILRASYEFDSPFWDDISESAKDFIRHLLERDPQKRFTCQQALQHLWISGDAAFDRDILGSVSEQIQKNFARTHWKRAFNATSFLRHIRKLGQSPEGEEASRQCMTRHSHPGLGTSQSPKW</sequence>
<comment type="function">
    <text evidence="1">Calcium/calmodulin-dependent protein kinase belonging to a proposed calcium-triggered signaling cascade. In vitro phosphorylates CREB1 and SYN1/synapsin I. Phosphorylates and activates CAMK1 (By similarity).</text>
</comment>
<comment type="catalytic activity">
    <reaction>
        <text>L-seryl-[protein] + ATP = O-phospho-L-seryl-[protein] + ADP + H(+)</text>
        <dbReference type="Rhea" id="RHEA:17989"/>
        <dbReference type="Rhea" id="RHEA-COMP:9863"/>
        <dbReference type="Rhea" id="RHEA-COMP:11604"/>
        <dbReference type="ChEBI" id="CHEBI:15378"/>
        <dbReference type="ChEBI" id="CHEBI:29999"/>
        <dbReference type="ChEBI" id="CHEBI:30616"/>
        <dbReference type="ChEBI" id="CHEBI:83421"/>
        <dbReference type="ChEBI" id="CHEBI:456216"/>
        <dbReference type="EC" id="2.7.11.17"/>
    </reaction>
</comment>
<comment type="catalytic activity">
    <reaction>
        <text>L-threonyl-[protein] + ATP = O-phospho-L-threonyl-[protein] + ADP + H(+)</text>
        <dbReference type="Rhea" id="RHEA:46608"/>
        <dbReference type="Rhea" id="RHEA-COMP:11060"/>
        <dbReference type="Rhea" id="RHEA-COMP:11605"/>
        <dbReference type="ChEBI" id="CHEBI:15378"/>
        <dbReference type="ChEBI" id="CHEBI:30013"/>
        <dbReference type="ChEBI" id="CHEBI:30616"/>
        <dbReference type="ChEBI" id="CHEBI:61977"/>
        <dbReference type="ChEBI" id="CHEBI:456216"/>
        <dbReference type="EC" id="2.7.11.17"/>
    </reaction>
</comment>
<comment type="activity regulation">
    <text evidence="1">Activated by Ca(2+)/calmodulin.</text>
</comment>
<comment type="subcellular location">
    <subcellularLocation>
        <location evidence="5">Cytoplasm</location>
    </subcellularLocation>
    <subcellularLocation>
        <location evidence="5">Nucleus</location>
    </subcellularLocation>
</comment>
<comment type="tissue specificity">
    <text evidence="5 6">Expressed at highest levels in adult brain, and expressed in embryo. In the adult brain detected at high levels in the anterior olfactory nuclei, piriform cortex, septal nuclei, bed nuclei of the stria terminalis, hippocampal pyramidal cells, dentate granule cells, amygdala, hypothalamic nuclei, parabrachial nucleus, and nucleus of the solitary tract. Expressed at lower levels in adult ovary and heart and at very low levels in testis, lung and muscle.</text>
</comment>
<comment type="developmental stage">
    <text evidence="5 6">During embryogenesis detected at 10 dpc and expression gradually increases thereafter. Expressed mainly in the nervous system, including brain, spinal cord, trigeminal ganglion, and retina. Within the CNS detected in the mantle zone, but not in the ventricular zone. Detected at postnatal day 23 with highest levels in mesencephalon. Also expressed in developing bone and gut.</text>
</comment>
<comment type="similarity">
    <text evidence="7">Belongs to the protein kinase superfamily. CAMK Ser/Thr protein kinase family. CaMK subfamily.</text>
</comment>
<comment type="sequence caution" evidence="7">
    <conflict type="erroneous initiation">
        <sequence resource="EMBL-CDS" id="AAH51996"/>
    </conflict>
</comment>
<protein>
    <recommendedName>
        <fullName>Calcium/calmodulin-dependent protein kinase type 1B</fullName>
        <ecNumber>2.7.11.17</ecNumber>
    </recommendedName>
    <alternativeName>
        <fullName>CaM kinase I beta</fullName>
        <shortName>CaM kinase IB</shortName>
        <shortName>CaM-KI beta</shortName>
        <shortName>CaMKI-beta</shortName>
    </alternativeName>
    <alternativeName>
        <fullName>Pregnancy up-regulated non-ubiquitously-expressed CaM kinase homolog</fullName>
    </alternativeName>
</protein>
<feature type="chain" id="PRO_0000086080" description="Calcium/calmodulin-dependent protein kinase type 1B">
    <location>
        <begin position="1"/>
        <end position="343"/>
    </location>
</feature>
<feature type="domain" description="Protein kinase" evidence="2">
    <location>
        <begin position="15"/>
        <end position="270"/>
    </location>
</feature>
<feature type="region of interest" description="Calmodulin-binding" evidence="1">
    <location>
        <begin position="290"/>
        <end position="311"/>
    </location>
</feature>
<feature type="region of interest" description="Disordered" evidence="4">
    <location>
        <begin position="314"/>
        <end position="343"/>
    </location>
</feature>
<feature type="active site" description="Proton acceptor" evidence="2 3">
    <location>
        <position position="136"/>
    </location>
</feature>
<feature type="binding site" evidence="2">
    <location>
        <begin position="21"/>
        <end position="29"/>
    </location>
    <ligand>
        <name>ATP</name>
        <dbReference type="ChEBI" id="CHEBI:30616"/>
    </ligand>
</feature>
<feature type="binding site" evidence="2">
    <location>
        <position position="44"/>
    </location>
    <ligand>
        <name>ATP</name>
        <dbReference type="ChEBI" id="CHEBI:30616"/>
    </ligand>
</feature>
<feature type="modified residue" description="Phosphoserine" evidence="8">
    <location>
        <position position="338"/>
    </location>
</feature>
<keyword id="KW-0067">ATP-binding</keyword>
<keyword id="KW-0106">Calcium</keyword>
<keyword id="KW-0112">Calmodulin-binding</keyword>
<keyword id="KW-0963">Cytoplasm</keyword>
<keyword id="KW-0418">Kinase</keyword>
<keyword id="KW-0547">Nucleotide-binding</keyword>
<keyword id="KW-0539">Nucleus</keyword>
<keyword id="KW-0597">Phosphoprotein</keyword>
<keyword id="KW-1185">Reference proteome</keyword>
<keyword id="KW-0723">Serine/threonine-protein kinase</keyword>
<keyword id="KW-0808">Transferase</keyword>
<name>KCC1B_MOUSE</name>
<gene>
    <name type="primary">Pnck</name>
</gene>
<accession>Q9QYK9</accession>
<accession>Q80W07</accession>
<reference key="1">
    <citation type="journal article" date="1999" name="J. Neurochem.">
        <title>Distribution and intracellular localization of a mouse homologue of Ca2+/calmodulin-dependent protein kinase Ibeta2 in the nervous system.</title>
        <authorList>
            <person name="Ueda T."/>
            <person name="Sakagami H."/>
            <person name="Abe K."/>
            <person name="Oishi I."/>
            <person name="Maruo A."/>
            <person name="Kondo H."/>
            <person name="Terashima T."/>
            <person name="Ichihashi M."/>
            <person name="Yamamura H."/>
            <person name="Minami Y."/>
        </authorList>
    </citation>
    <scope>NUCLEOTIDE SEQUENCE [MRNA]</scope>
    <scope>SUBCELLULAR LOCATION</scope>
    <scope>TISSUE SPECIFICITY</scope>
    <scope>DEVELOPMENTAL STAGE</scope>
</reference>
<reference key="2">
    <citation type="journal article" date="2000" name="Genomics">
        <title>Cloning, characterization, and chromosomal localization of Pnck, a Ca2+/calmodulin-pependent protein kinase.</title>
        <authorList>
            <person name="Gardner H.P."/>
            <person name="Rajan J.V."/>
            <person name="Ha S.I."/>
            <person name="Copeland N.G."/>
            <person name="Gilbert D.J."/>
            <person name="Jenkins N.A."/>
            <person name="Marquis S.T."/>
            <person name="Chodosh L.A."/>
        </authorList>
    </citation>
    <scope>NUCLEOTIDE SEQUENCE [MRNA]</scope>
    <scope>TISSUE SPECIFICITY</scope>
    <scope>DEVELOPMENTAL STAGE</scope>
    <source>
        <tissue>Brain</tissue>
    </source>
</reference>
<reference key="3">
    <citation type="journal article" date="2004" name="Genome Res.">
        <title>The status, quality, and expansion of the NIH full-length cDNA project: the Mammalian Gene Collection (MGC).</title>
        <authorList>
            <consortium name="The MGC Project Team"/>
        </authorList>
    </citation>
    <scope>NUCLEOTIDE SEQUENCE [LARGE SCALE MRNA]</scope>
    <source>
        <strain>FVB/N</strain>
        <tissue>Brain</tissue>
        <tissue>Colon</tissue>
    </source>
</reference>
<reference key="4">
    <citation type="journal article" date="2010" name="Cell">
        <title>A tissue-specific atlas of mouse protein phosphorylation and expression.</title>
        <authorList>
            <person name="Huttlin E.L."/>
            <person name="Jedrychowski M.P."/>
            <person name="Elias J.E."/>
            <person name="Goswami T."/>
            <person name="Rad R."/>
            <person name="Beausoleil S.A."/>
            <person name="Villen J."/>
            <person name="Haas W."/>
            <person name="Sowa M.E."/>
            <person name="Gygi S.P."/>
        </authorList>
    </citation>
    <scope>PHOSPHORYLATION [LARGE SCALE ANALYSIS] AT SER-338</scope>
    <scope>IDENTIFICATION BY MASS SPECTROMETRY [LARGE SCALE ANALYSIS]</scope>
    <source>
        <tissue>Brain</tissue>
    </source>
</reference>
<dbReference type="EC" id="2.7.11.17"/>
<dbReference type="EMBL" id="AB023027">
    <property type="protein sequence ID" value="BAA87926.1"/>
    <property type="molecule type" value="mRNA"/>
</dbReference>
<dbReference type="EMBL" id="AF181984">
    <property type="protein sequence ID" value="AAF29157.1"/>
    <property type="molecule type" value="mRNA"/>
</dbReference>
<dbReference type="EMBL" id="BC051996">
    <property type="protein sequence ID" value="AAH51996.1"/>
    <property type="status" value="ALT_INIT"/>
    <property type="molecule type" value="mRNA"/>
</dbReference>
<dbReference type="EMBL" id="BC055891">
    <property type="protein sequence ID" value="AAH55891.1"/>
    <property type="molecule type" value="mRNA"/>
</dbReference>
<dbReference type="CCDS" id="CCDS30207.1"/>
<dbReference type="RefSeq" id="NP_001186280.1">
    <property type="nucleotide sequence ID" value="NM_001199351.1"/>
</dbReference>
<dbReference type="RefSeq" id="NP_001186281.1">
    <property type="nucleotide sequence ID" value="NM_001199352.1"/>
</dbReference>
<dbReference type="RefSeq" id="NP_036170.1">
    <property type="nucleotide sequence ID" value="NM_012040.3"/>
</dbReference>
<dbReference type="RefSeq" id="XP_006528407.1">
    <property type="nucleotide sequence ID" value="XM_006528344.5"/>
</dbReference>
<dbReference type="RefSeq" id="XP_011245994.1">
    <property type="nucleotide sequence ID" value="XM_011247692.3"/>
</dbReference>
<dbReference type="RefSeq" id="XP_030107390.1">
    <property type="nucleotide sequence ID" value="XM_030251530.2"/>
</dbReference>
<dbReference type="RefSeq" id="XP_030107391.1">
    <property type="nucleotide sequence ID" value="XM_030251531.1"/>
</dbReference>
<dbReference type="SMR" id="Q9QYK9"/>
<dbReference type="FunCoup" id="Q9QYK9">
    <property type="interactions" value="375"/>
</dbReference>
<dbReference type="STRING" id="10090.ENSMUSP00000002087"/>
<dbReference type="GlyGen" id="Q9QYK9">
    <property type="glycosylation" value="1 site, 1 N-linked glycan (1 site)"/>
</dbReference>
<dbReference type="iPTMnet" id="Q9QYK9"/>
<dbReference type="PhosphoSitePlus" id="Q9QYK9"/>
<dbReference type="PaxDb" id="10090-ENSMUSP00000002087"/>
<dbReference type="ProteomicsDB" id="263485"/>
<dbReference type="Antibodypedia" id="2076">
    <property type="antibodies" value="204 antibodies from 26 providers"/>
</dbReference>
<dbReference type="DNASU" id="93843"/>
<dbReference type="Ensembl" id="ENSMUST00000002087.14">
    <property type="protein sequence ID" value="ENSMUSP00000002087.8"/>
    <property type="gene ID" value="ENSMUSG00000002012.14"/>
</dbReference>
<dbReference type="Ensembl" id="ENSMUST00000114472.8">
    <property type="protein sequence ID" value="ENSMUSP00000110116.2"/>
    <property type="gene ID" value="ENSMUSG00000002012.14"/>
</dbReference>
<dbReference type="Ensembl" id="ENSMUST00000114473.8">
    <property type="protein sequence ID" value="ENSMUSP00000110117.2"/>
    <property type="gene ID" value="ENSMUSG00000002012.14"/>
</dbReference>
<dbReference type="GeneID" id="93843"/>
<dbReference type="KEGG" id="mmu:93843"/>
<dbReference type="UCSC" id="uc009tmc.2">
    <property type="organism name" value="mouse"/>
</dbReference>
<dbReference type="AGR" id="MGI:1347357"/>
<dbReference type="CTD" id="139728"/>
<dbReference type="MGI" id="MGI:1347357">
    <property type="gene designation" value="Pnck"/>
</dbReference>
<dbReference type="VEuPathDB" id="HostDB:ENSMUSG00000002012"/>
<dbReference type="eggNOG" id="KOG0032">
    <property type="taxonomic scope" value="Eukaryota"/>
</dbReference>
<dbReference type="GeneTree" id="ENSGT00940000162187"/>
<dbReference type="InParanoid" id="Q9QYK9"/>
<dbReference type="OMA" id="MSRSHPG"/>
<dbReference type="OrthoDB" id="40902at2759"/>
<dbReference type="PhylomeDB" id="Q9QYK9"/>
<dbReference type="TreeFam" id="TF314166"/>
<dbReference type="BioGRID-ORCS" id="93843">
    <property type="hits" value="0 hits in 79 CRISPR screens"/>
</dbReference>
<dbReference type="ChiTaRS" id="Pnck">
    <property type="organism name" value="mouse"/>
</dbReference>
<dbReference type="PRO" id="PR:Q9QYK9"/>
<dbReference type="Proteomes" id="UP000000589">
    <property type="component" value="Chromosome X"/>
</dbReference>
<dbReference type="RNAct" id="Q9QYK9">
    <property type="molecule type" value="protein"/>
</dbReference>
<dbReference type="Bgee" id="ENSMUSG00000002012">
    <property type="expression patterns" value="Expressed in ventromedial nucleus of hypothalamus and 201 other cell types or tissues"/>
</dbReference>
<dbReference type="ExpressionAtlas" id="Q9QYK9">
    <property type="expression patterns" value="baseline and differential"/>
</dbReference>
<dbReference type="GO" id="GO:0005737">
    <property type="term" value="C:cytoplasm"/>
    <property type="evidence" value="ECO:0007669"/>
    <property type="project" value="UniProtKB-SubCell"/>
</dbReference>
<dbReference type="GO" id="GO:0005634">
    <property type="term" value="C:nucleus"/>
    <property type="evidence" value="ECO:0007669"/>
    <property type="project" value="UniProtKB-SubCell"/>
</dbReference>
<dbReference type="GO" id="GO:0005524">
    <property type="term" value="F:ATP binding"/>
    <property type="evidence" value="ECO:0007669"/>
    <property type="project" value="UniProtKB-KW"/>
</dbReference>
<dbReference type="GO" id="GO:0004683">
    <property type="term" value="F:calcium/calmodulin-dependent protein kinase activity"/>
    <property type="evidence" value="ECO:0007669"/>
    <property type="project" value="UniProtKB-EC"/>
</dbReference>
<dbReference type="GO" id="GO:0005516">
    <property type="term" value="F:calmodulin binding"/>
    <property type="evidence" value="ECO:0007669"/>
    <property type="project" value="UniProtKB-KW"/>
</dbReference>
<dbReference type="GO" id="GO:0106310">
    <property type="term" value="F:protein serine kinase activity"/>
    <property type="evidence" value="ECO:0007669"/>
    <property type="project" value="RHEA"/>
</dbReference>
<dbReference type="CDD" id="cd14169">
    <property type="entry name" value="STKc_CaMKI_beta"/>
    <property type="match status" value="1"/>
</dbReference>
<dbReference type="FunFam" id="1.10.510.10:FF:000026">
    <property type="entry name" value="Calcium/calmodulin-dependent protein kinase type 1"/>
    <property type="match status" value="1"/>
</dbReference>
<dbReference type="FunFam" id="3.30.200.20:FF:000345">
    <property type="entry name" value="Calcium/calmodulin-dependent protein kinase type 1B"/>
    <property type="match status" value="1"/>
</dbReference>
<dbReference type="Gene3D" id="3.30.200.20">
    <property type="entry name" value="Phosphorylase Kinase, domain 1"/>
    <property type="match status" value="1"/>
</dbReference>
<dbReference type="Gene3D" id="1.10.510.10">
    <property type="entry name" value="Transferase(Phosphotransferase) domain 1"/>
    <property type="match status" value="1"/>
</dbReference>
<dbReference type="InterPro" id="IPR042696">
    <property type="entry name" value="CaMKI_beta_STKc"/>
</dbReference>
<dbReference type="InterPro" id="IPR011009">
    <property type="entry name" value="Kinase-like_dom_sf"/>
</dbReference>
<dbReference type="InterPro" id="IPR000719">
    <property type="entry name" value="Prot_kinase_dom"/>
</dbReference>
<dbReference type="InterPro" id="IPR017441">
    <property type="entry name" value="Protein_kinase_ATP_BS"/>
</dbReference>
<dbReference type="InterPro" id="IPR008271">
    <property type="entry name" value="Ser/Thr_kinase_AS"/>
</dbReference>
<dbReference type="PANTHER" id="PTHR24347">
    <property type="entry name" value="SERINE/THREONINE-PROTEIN KINASE"/>
    <property type="match status" value="1"/>
</dbReference>
<dbReference type="Pfam" id="PF00069">
    <property type="entry name" value="Pkinase"/>
    <property type="match status" value="1"/>
</dbReference>
<dbReference type="SMART" id="SM00220">
    <property type="entry name" value="S_TKc"/>
    <property type="match status" value="1"/>
</dbReference>
<dbReference type="SUPFAM" id="SSF56112">
    <property type="entry name" value="Protein kinase-like (PK-like)"/>
    <property type="match status" value="1"/>
</dbReference>
<dbReference type="PROSITE" id="PS00107">
    <property type="entry name" value="PROTEIN_KINASE_ATP"/>
    <property type="match status" value="1"/>
</dbReference>
<dbReference type="PROSITE" id="PS50011">
    <property type="entry name" value="PROTEIN_KINASE_DOM"/>
    <property type="match status" value="1"/>
</dbReference>
<dbReference type="PROSITE" id="PS00108">
    <property type="entry name" value="PROTEIN_KINASE_ST"/>
    <property type="match status" value="1"/>
</dbReference>
<organism>
    <name type="scientific">Mus musculus</name>
    <name type="common">Mouse</name>
    <dbReference type="NCBI Taxonomy" id="10090"/>
    <lineage>
        <taxon>Eukaryota</taxon>
        <taxon>Metazoa</taxon>
        <taxon>Chordata</taxon>
        <taxon>Craniata</taxon>
        <taxon>Vertebrata</taxon>
        <taxon>Euteleostomi</taxon>
        <taxon>Mammalia</taxon>
        <taxon>Eutheria</taxon>
        <taxon>Euarchontoglires</taxon>
        <taxon>Glires</taxon>
        <taxon>Rodentia</taxon>
        <taxon>Myomorpha</taxon>
        <taxon>Muroidea</taxon>
        <taxon>Muridae</taxon>
        <taxon>Murinae</taxon>
        <taxon>Mus</taxon>
        <taxon>Mus</taxon>
    </lineage>
</organism>